<dbReference type="EC" id="1.5.1.15"/>
<dbReference type="EMBL" id="AAFI02000022">
    <property type="protein sequence ID" value="EAL68536.1"/>
    <property type="molecule type" value="Genomic_DNA"/>
</dbReference>
<dbReference type="RefSeq" id="XP_642462.1">
    <property type="nucleotide sequence ID" value="XM_637370.1"/>
</dbReference>
<dbReference type="SMR" id="Q86KU6"/>
<dbReference type="FunCoup" id="Q86KU6">
    <property type="interactions" value="147"/>
</dbReference>
<dbReference type="STRING" id="44689.Q86KU6"/>
<dbReference type="PaxDb" id="44689-DDB0230118"/>
<dbReference type="EnsemblProtists" id="EAL68536">
    <property type="protein sequence ID" value="EAL68536"/>
    <property type="gene ID" value="DDB_G0277725"/>
</dbReference>
<dbReference type="GeneID" id="8621173"/>
<dbReference type="KEGG" id="ddi:DDB_G0277725"/>
<dbReference type="dictyBase" id="DDB_G0277725">
    <property type="gene designation" value="thfA"/>
</dbReference>
<dbReference type="VEuPathDB" id="AmoebaDB:DDB_G0277725"/>
<dbReference type="eggNOG" id="KOG0089">
    <property type="taxonomic scope" value="Eukaryota"/>
</dbReference>
<dbReference type="HOGENOM" id="CLU_031413_0_0_1"/>
<dbReference type="InParanoid" id="Q86KU6"/>
<dbReference type="OMA" id="CKVITAE"/>
<dbReference type="PhylomeDB" id="Q86KU6"/>
<dbReference type="UniPathway" id="UPA00193"/>
<dbReference type="PRO" id="PR:Q86KU6"/>
<dbReference type="Proteomes" id="UP000002195">
    <property type="component" value="Chromosome 2"/>
</dbReference>
<dbReference type="GO" id="GO:0005829">
    <property type="term" value="C:cytosol"/>
    <property type="evidence" value="ECO:0000318"/>
    <property type="project" value="GO_Central"/>
</dbReference>
<dbReference type="GO" id="GO:0004487">
    <property type="term" value="F:methylenetetrahydrofolate dehydrogenase (NAD+) activity"/>
    <property type="evidence" value="ECO:0000250"/>
    <property type="project" value="dictyBase"/>
</dbReference>
<dbReference type="GO" id="GO:0004488">
    <property type="term" value="F:methylenetetrahydrofolate dehydrogenase (NADP+) activity"/>
    <property type="evidence" value="ECO:0007669"/>
    <property type="project" value="InterPro"/>
</dbReference>
<dbReference type="GO" id="GO:0006730">
    <property type="term" value="P:one-carbon metabolic process"/>
    <property type="evidence" value="ECO:0000250"/>
    <property type="project" value="dictyBase"/>
</dbReference>
<dbReference type="GO" id="GO:0009113">
    <property type="term" value="P:purine nucleobase biosynthetic process"/>
    <property type="evidence" value="ECO:0000250"/>
    <property type="project" value="dictyBase"/>
</dbReference>
<dbReference type="GO" id="GO:0006164">
    <property type="term" value="P:purine nucleotide biosynthetic process"/>
    <property type="evidence" value="ECO:0007669"/>
    <property type="project" value="UniProtKB-KW"/>
</dbReference>
<dbReference type="GO" id="GO:0035999">
    <property type="term" value="P:tetrahydrofolate interconversion"/>
    <property type="evidence" value="ECO:0007669"/>
    <property type="project" value="UniProtKB-UniPathway"/>
</dbReference>
<dbReference type="CDD" id="cd01079">
    <property type="entry name" value="NAD_bind_m-THF_DH"/>
    <property type="match status" value="1"/>
</dbReference>
<dbReference type="FunFam" id="3.40.50.720:FF:001447">
    <property type="entry name" value="Methylenetetrahydrofolate dehydrogenase"/>
    <property type="match status" value="1"/>
</dbReference>
<dbReference type="Gene3D" id="3.40.50.10860">
    <property type="entry name" value="Leucine Dehydrogenase, chain A, domain 1"/>
    <property type="match status" value="1"/>
</dbReference>
<dbReference type="Gene3D" id="3.40.50.720">
    <property type="entry name" value="NAD(P)-binding Rossmann-like Domain"/>
    <property type="match status" value="1"/>
</dbReference>
<dbReference type="InterPro" id="IPR046346">
    <property type="entry name" value="Aminoacid_DH-like_N_sf"/>
</dbReference>
<dbReference type="InterPro" id="IPR035812">
    <property type="entry name" value="m-THF_DH_NAD-bd"/>
</dbReference>
<dbReference type="InterPro" id="IPR036291">
    <property type="entry name" value="NAD(P)-bd_dom_sf"/>
</dbReference>
<dbReference type="InterPro" id="IPR000672">
    <property type="entry name" value="THF_DH/CycHdrlase"/>
</dbReference>
<dbReference type="InterPro" id="IPR020630">
    <property type="entry name" value="THF_DH/CycHdrlase_cat_dom"/>
</dbReference>
<dbReference type="InterPro" id="IPR020631">
    <property type="entry name" value="THF_DH/CycHdrlase_NAD-bd_dom"/>
</dbReference>
<dbReference type="PANTHER" id="PTHR48099">
    <property type="entry name" value="C-1-TETRAHYDROFOLATE SYNTHASE, CYTOPLASMIC-RELATED"/>
    <property type="match status" value="1"/>
</dbReference>
<dbReference type="PANTHER" id="PTHR48099:SF3">
    <property type="entry name" value="METHYLENETETRAHYDROFOLATE DEHYDROGENASE [NAD(+)]"/>
    <property type="match status" value="1"/>
</dbReference>
<dbReference type="Pfam" id="PF00763">
    <property type="entry name" value="THF_DHG_CYH"/>
    <property type="match status" value="1"/>
</dbReference>
<dbReference type="Pfam" id="PF02882">
    <property type="entry name" value="THF_DHG_CYH_C"/>
    <property type="match status" value="1"/>
</dbReference>
<dbReference type="PRINTS" id="PR00085">
    <property type="entry name" value="THFDHDRGNASE"/>
</dbReference>
<dbReference type="SUPFAM" id="SSF53223">
    <property type="entry name" value="Aminoacid dehydrogenase-like, N-terminal domain"/>
    <property type="match status" value="1"/>
</dbReference>
<dbReference type="SUPFAM" id="SSF51735">
    <property type="entry name" value="NAD(P)-binding Rossmann-fold domains"/>
    <property type="match status" value="1"/>
</dbReference>
<sequence>MEEYKEIMQNKKGKVDVTPIANFFREEVKQQITKNCWKPRVVAFLTSDDQGAIDYSKWTKLACQKDGIEFILKRVERVDLEDLIIEANNDSCVHGILVYYPVFGGMMDSYLQDVVSPTKDIEGLSTQNRFNLYHNIRFMDGETATKKCVIPCTPLAMVKIIDNLGIYDKSLAMGEHLKGKTVTIVNRSEIVGRPLAAMLANDGAIVYSIDINGIIIFQSGKRHGTIKMSETNVTREEAISKSDILILGVPSPNYKVNSDLIQDGTIVINFAGCLNVDESIQEKSILVPTIGKVTIAMLERNLLRLFNNQISNK</sequence>
<name>MTD1_DICDI</name>
<proteinExistence type="inferred from homology"/>
<feature type="chain" id="PRO_0000327391" description="Methylenetetrahydrofolate dehydrogenase [NAD(+)]">
    <location>
        <begin position="1"/>
        <end position="313"/>
    </location>
</feature>
<feature type="active site" evidence="1">
    <location>
        <position position="152"/>
    </location>
</feature>
<feature type="binding site" evidence="1">
    <location>
        <begin position="187"/>
        <end position="188"/>
    </location>
    <ligand>
        <name>NAD(+)</name>
        <dbReference type="ChEBI" id="CHEBI:57540"/>
    </ligand>
</feature>
<feature type="binding site" evidence="1">
    <location>
        <begin position="210"/>
        <end position="211"/>
    </location>
    <ligand>
        <name>NAD(+)</name>
        <dbReference type="ChEBI" id="CHEBI:57540"/>
    </ligand>
</feature>
<feature type="binding site" evidence="1">
    <location>
        <begin position="270"/>
        <end position="272"/>
    </location>
    <ligand>
        <name>NAD(+)</name>
        <dbReference type="ChEBI" id="CHEBI:57540"/>
    </ligand>
</feature>
<gene>
    <name type="primary">thfA</name>
    <name type="ORF">DDB_G0277725</name>
</gene>
<reference key="1">
    <citation type="journal article" date="2002" name="Nature">
        <title>Sequence and analysis of chromosome 2 of Dictyostelium discoideum.</title>
        <authorList>
            <person name="Gloeckner G."/>
            <person name="Eichinger L."/>
            <person name="Szafranski K."/>
            <person name="Pachebat J.A."/>
            <person name="Bankier A.T."/>
            <person name="Dear P.H."/>
            <person name="Lehmann R."/>
            <person name="Baumgart C."/>
            <person name="Parra G."/>
            <person name="Abril J.F."/>
            <person name="Guigo R."/>
            <person name="Kumpf K."/>
            <person name="Tunggal B."/>
            <person name="Cox E.C."/>
            <person name="Quail M.A."/>
            <person name="Platzer M."/>
            <person name="Rosenthal A."/>
            <person name="Noegel A.A."/>
        </authorList>
    </citation>
    <scope>NUCLEOTIDE SEQUENCE [LARGE SCALE GENOMIC DNA]</scope>
    <source>
        <strain>AX4</strain>
    </source>
</reference>
<reference key="2">
    <citation type="journal article" date="2005" name="Nature">
        <title>The genome of the social amoeba Dictyostelium discoideum.</title>
        <authorList>
            <person name="Eichinger L."/>
            <person name="Pachebat J.A."/>
            <person name="Gloeckner G."/>
            <person name="Rajandream M.A."/>
            <person name="Sucgang R."/>
            <person name="Berriman M."/>
            <person name="Song J."/>
            <person name="Olsen R."/>
            <person name="Szafranski K."/>
            <person name="Xu Q."/>
            <person name="Tunggal B."/>
            <person name="Kummerfeld S."/>
            <person name="Madera M."/>
            <person name="Konfortov B.A."/>
            <person name="Rivero F."/>
            <person name="Bankier A.T."/>
            <person name="Lehmann R."/>
            <person name="Hamlin N."/>
            <person name="Davies R."/>
            <person name="Gaudet P."/>
            <person name="Fey P."/>
            <person name="Pilcher K."/>
            <person name="Chen G."/>
            <person name="Saunders D."/>
            <person name="Sodergren E.J."/>
            <person name="Davis P."/>
            <person name="Kerhornou A."/>
            <person name="Nie X."/>
            <person name="Hall N."/>
            <person name="Anjard C."/>
            <person name="Hemphill L."/>
            <person name="Bason N."/>
            <person name="Farbrother P."/>
            <person name="Desany B."/>
            <person name="Just E."/>
            <person name="Morio T."/>
            <person name="Rost R."/>
            <person name="Churcher C.M."/>
            <person name="Cooper J."/>
            <person name="Haydock S."/>
            <person name="van Driessche N."/>
            <person name="Cronin A."/>
            <person name="Goodhead I."/>
            <person name="Muzny D.M."/>
            <person name="Mourier T."/>
            <person name="Pain A."/>
            <person name="Lu M."/>
            <person name="Harper D."/>
            <person name="Lindsay R."/>
            <person name="Hauser H."/>
            <person name="James K.D."/>
            <person name="Quiles M."/>
            <person name="Madan Babu M."/>
            <person name="Saito T."/>
            <person name="Buchrieser C."/>
            <person name="Wardroper A."/>
            <person name="Felder M."/>
            <person name="Thangavelu M."/>
            <person name="Johnson D."/>
            <person name="Knights A."/>
            <person name="Loulseged H."/>
            <person name="Mungall K.L."/>
            <person name="Oliver K."/>
            <person name="Price C."/>
            <person name="Quail M.A."/>
            <person name="Urushihara H."/>
            <person name="Hernandez J."/>
            <person name="Rabbinowitsch E."/>
            <person name="Steffen D."/>
            <person name="Sanders M."/>
            <person name="Ma J."/>
            <person name="Kohara Y."/>
            <person name="Sharp S."/>
            <person name="Simmonds M.N."/>
            <person name="Spiegler S."/>
            <person name="Tivey A."/>
            <person name="Sugano S."/>
            <person name="White B."/>
            <person name="Walker D."/>
            <person name="Woodward J.R."/>
            <person name="Winckler T."/>
            <person name="Tanaka Y."/>
            <person name="Shaulsky G."/>
            <person name="Schleicher M."/>
            <person name="Weinstock G.M."/>
            <person name="Rosenthal A."/>
            <person name="Cox E.C."/>
            <person name="Chisholm R.L."/>
            <person name="Gibbs R.A."/>
            <person name="Loomis W.F."/>
            <person name="Platzer M."/>
            <person name="Kay R.R."/>
            <person name="Williams J.G."/>
            <person name="Dear P.H."/>
            <person name="Noegel A.A."/>
            <person name="Barrell B.G."/>
            <person name="Kuspa A."/>
        </authorList>
    </citation>
    <scope>NUCLEOTIDE SEQUENCE [LARGE SCALE GENOMIC DNA]</scope>
    <source>
        <strain>AX4</strain>
    </source>
</reference>
<protein>
    <recommendedName>
        <fullName>Methylenetetrahydrofolate dehydrogenase [NAD(+)]</fullName>
        <ecNumber>1.5.1.15</ecNumber>
    </recommendedName>
</protein>
<keyword id="KW-0520">NAD</keyword>
<keyword id="KW-0554">One-carbon metabolism</keyword>
<keyword id="KW-0560">Oxidoreductase</keyword>
<keyword id="KW-0658">Purine biosynthesis</keyword>
<keyword id="KW-1185">Reference proteome</keyword>
<comment type="function">
    <text evidence="1">Catalyzes oxidation of cytoplasmic one-carbon units for purine biosynthesis.</text>
</comment>
<comment type="catalytic activity">
    <reaction>
        <text>(6R)-5,10-methylene-5,6,7,8-tetrahydrofolate + NAD(+) = (6R)-5,10-methenyltetrahydrofolate + NADH</text>
        <dbReference type="Rhea" id="RHEA:22892"/>
        <dbReference type="ChEBI" id="CHEBI:15636"/>
        <dbReference type="ChEBI" id="CHEBI:57455"/>
        <dbReference type="ChEBI" id="CHEBI:57540"/>
        <dbReference type="ChEBI" id="CHEBI:57945"/>
        <dbReference type="EC" id="1.5.1.15"/>
    </reaction>
</comment>
<comment type="pathway">
    <text>One-carbon metabolism; tetrahydrofolate interconversion.</text>
</comment>
<comment type="subunit">
    <text evidence="1">Homodimer.</text>
</comment>
<comment type="similarity">
    <text evidence="2">Belongs to the tetrahydrofolate dehydrogenase/cyclohydrolase family.</text>
</comment>
<organism>
    <name type="scientific">Dictyostelium discoideum</name>
    <name type="common">Social amoeba</name>
    <dbReference type="NCBI Taxonomy" id="44689"/>
    <lineage>
        <taxon>Eukaryota</taxon>
        <taxon>Amoebozoa</taxon>
        <taxon>Evosea</taxon>
        <taxon>Eumycetozoa</taxon>
        <taxon>Dictyostelia</taxon>
        <taxon>Dictyosteliales</taxon>
        <taxon>Dictyosteliaceae</taxon>
        <taxon>Dictyostelium</taxon>
    </lineage>
</organism>
<evidence type="ECO:0000250" key="1"/>
<evidence type="ECO:0000305" key="2"/>
<accession>Q86KU6</accession>
<accession>Q54Z91</accession>